<proteinExistence type="inferred from homology"/>
<protein>
    <recommendedName>
        <fullName evidence="2">Valine--tRNA ligase</fullName>
        <ecNumber evidence="2">6.1.1.9</ecNumber>
    </recommendedName>
    <alternativeName>
        <fullName evidence="2">Valyl-tRNA synthetase</fullName>
        <shortName evidence="2">ValRS</shortName>
    </alternativeName>
</protein>
<feature type="chain" id="PRO_0000224589" description="Valine--tRNA ligase">
    <location>
        <begin position="1"/>
        <end position="862"/>
    </location>
</feature>
<feature type="coiled-coil region" evidence="2">
    <location>
        <begin position="802"/>
        <end position="862"/>
    </location>
</feature>
<feature type="short sequence motif" description="'HIGH' region">
    <location>
        <begin position="43"/>
        <end position="53"/>
    </location>
</feature>
<feature type="short sequence motif" description="'KMSKS' region">
    <location>
        <begin position="528"/>
        <end position="532"/>
    </location>
</feature>
<feature type="binding site" evidence="1">
    <location>
        <position position="176"/>
    </location>
    <ligand>
        <name>Zn(2+)</name>
        <dbReference type="ChEBI" id="CHEBI:29105"/>
        <label>1</label>
    </ligand>
</feature>
<feature type="binding site" evidence="1">
    <location>
        <position position="179"/>
    </location>
    <ligand>
        <name>Zn(2+)</name>
        <dbReference type="ChEBI" id="CHEBI:29105"/>
        <label>1</label>
    </ligand>
</feature>
<feature type="binding site" evidence="1">
    <location>
        <position position="344"/>
    </location>
    <ligand>
        <name>Zn(2+)</name>
        <dbReference type="ChEBI" id="CHEBI:29105"/>
        <label>1</label>
    </ligand>
</feature>
<feature type="binding site" evidence="1">
    <location>
        <position position="347"/>
    </location>
    <ligand>
        <name>Zn(2+)</name>
        <dbReference type="ChEBI" id="CHEBI:29105"/>
        <label>1</label>
    </ligand>
</feature>
<feature type="binding site" evidence="1">
    <location>
        <position position="417"/>
    </location>
    <ligand>
        <name>Zn(2+)</name>
        <dbReference type="ChEBI" id="CHEBI:29105"/>
        <label>2</label>
    </ligand>
</feature>
<feature type="binding site" evidence="1">
    <location>
        <position position="420"/>
    </location>
    <ligand>
        <name>Zn(2+)</name>
        <dbReference type="ChEBI" id="CHEBI:29105"/>
        <label>2</label>
    </ligand>
</feature>
<feature type="binding site" evidence="1">
    <location>
        <position position="438"/>
    </location>
    <ligand>
        <name>Zn(2+)</name>
        <dbReference type="ChEBI" id="CHEBI:29105"/>
        <label>2</label>
    </ligand>
</feature>
<feature type="binding site" evidence="1">
    <location>
        <position position="441"/>
    </location>
    <ligand>
        <name>Zn(2+)</name>
        <dbReference type="ChEBI" id="CHEBI:29105"/>
        <label>2</label>
    </ligand>
</feature>
<feature type="binding site" evidence="2">
    <location>
        <position position="531"/>
    </location>
    <ligand>
        <name>ATP</name>
        <dbReference type="ChEBI" id="CHEBI:30616"/>
    </ligand>
</feature>
<name>SYV_THET2</name>
<gene>
    <name evidence="2" type="primary">valS</name>
    <name type="ordered locus">TT_C0805</name>
</gene>
<dbReference type="EC" id="6.1.1.9" evidence="2"/>
<dbReference type="EMBL" id="AE017221">
    <property type="protein sequence ID" value="AAS81151.1"/>
    <property type="molecule type" value="Genomic_DNA"/>
</dbReference>
<dbReference type="RefSeq" id="WP_011173237.1">
    <property type="nucleotide sequence ID" value="NC_005835.1"/>
</dbReference>
<dbReference type="SMR" id="Q72JG7"/>
<dbReference type="KEGG" id="tth:TT_C0805"/>
<dbReference type="eggNOG" id="COG0525">
    <property type="taxonomic scope" value="Bacteria"/>
</dbReference>
<dbReference type="HOGENOM" id="CLU_001493_0_2_0"/>
<dbReference type="OrthoDB" id="9810365at2"/>
<dbReference type="Proteomes" id="UP000000592">
    <property type="component" value="Chromosome"/>
</dbReference>
<dbReference type="GO" id="GO:0005829">
    <property type="term" value="C:cytosol"/>
    <property type="evidence" value="ECO:0007669"/>
    <property type="project" value="TreeGrafter"/>
</dbReference>
<dbReference type="GO" id="GO:0002161">
    <property type="term" value="F:aminoacyl-tRNA deacylase activity"/>
    <property type="evidence" value="ECO:0007669"/>
    <property type="project" value="InterPro"/>
</dbReference>
<dbReference type="GO" id="GO:0005524">
    <property type="term" value="F:ATP binding"/>
    <property type="evidence" value="ECO:0007669"/>
    <property type="project" value="UniProtKB-UniRule"/>
</dbReference>
<dbReference type="GO" id="GO:0046872">
    <property type="term" value="F:metal ion binding"/>
    <property type="evidence" value="ECO:0007669"/>
    <property type="project" value="UniProtKB-KW"/>
</dbReference>
<dbReference type="GO" id="GO:0004832">
    <property type="term" value="F:valine-tRNA ligase activity"/>
    <property type="evidence" value="ECO:0007669"/>
    <property type="project" value="UniProtKB-UniRule"/>
</dbReference>
<dbReference type="GO" id="GO:0006438">
    <property type="term" value="P:valyl-tRNA aminoacylation"/>
    <property type="evidence" value="ECO:0007669"/>
    <property type="project" value="UniProtKB-UniRule"/>
</dbReference>
<dbReference type="CDD" id="cd07962">
    <property type="entry name" value="Anticodon_Ia_Val"/>
    <property type="match status" value="1"/>
</dbReference>
<dbReference type="CDD" id="cd00817">
    <property type="entry name" value="ValRS_core"/>
    <property type="match status" value="1"/>
</dbReference>
<dbReference type="FunFam" id="3.40.50.620:FF:000020">
    <property type="entry name" value="Valine--tRNA ligase, mitochondrial"/>
    <property type="match status" value="1"/>
</dbReference>
<dbReference type="Gene3D" id="3.30.1170.10">
    <property type="match status" value="1"/>
</dbReference>
<dbReference type="Gene3D" id="3.40.50.620">
    <property type="entry name" value="HUPs"/>
    <property type="match status" value="2"/>
</dbReference>
<dbReference type="Gene3D" id="1.10.730.10">
    <property type="entry name" value="Isoleucyl-tRNA Synthetase, Domain 1"/>
    <property type="match status" value="1"/>
</dbReference>
<dbReference type="Gene3D" id="1.10.287.380">
    <property type="entry name" value="Valyl-tRNA synthetase, C-terminal domain"/>
    <property type="match status" value="1"/>
</dbReference>
<dbReference type="Gene3D" id="3.90.740.10">
    <property type="entry name" value="Valyl/Leucyl/Isoleucyl-tRNA synthetase, editing domain"/>
    <property type="match status" value="1"/>
</dbReference>
<dbReference type="HAMAP" id="MF_02004">
    <property type="entry name" value="Val_tRNA_synth_type1"/>
    <property type="match status" value="1"/>
</dbReference>
<dbReference type="InterPro" id="IPR001412">
    <property type="entry name" value="aa-tRNA-synth_I_CS"/>
</dbReference>
<dbReference type="InterPro" id="IPR002300">
    <property type="entry name" value="aa-tRNA-synth_Ia"/>
</dbReference>
<dbReference type="InterPro" id="IPR033705">
    <property type="entry name" value="Anticodon_Ia_Val"/>
</dbReference>
<dbReference type="InterPro" id="IPR013155">
    <property type="entry name" value="M/V/L/I-tRNA-synth_anticd-bd"/>
</dbReference>
<dbReference type="InterPro" id="IPR014729">
    <property type="entry name" value="Rossmann-like_a/b/a_fold"/>
</dbReference>
<dbReference type="InterPro" id="IPR010978">
    <property type="entry name" value="tRNA-bd_arm"/>
</dbReference>
<dbReference type="InterPro" id="IPR009080">
    <property type="entry name" value="tRNAsynth_Ia_anticodon-bd"/>
</dbReference>
<dbReference type="InterPro" id="IPR037118">
    <property type="entry name" value="Val-tRNA_synth_C_sf"/>
</dbReference>
<dbReference type="InterPro" id="IPR019499">
    <property type="entry name" value="Val-tRNA_synth_tRNA-bd"/>
</dbReference>
<dbReference type="InterPro" id="IPR009008">
    <property type="entry name" value="Val/Leu/Ile-tRNA-synth_edit"/>
</dbReference>
<dbReference type="InterPro" id="IPR002303">
    <property type="entry name" value="Valyl-tRNA_ligase"/>
</dbReference>
<dbReference type="NCBIfam" id="NF004349">
    <property type="entry name" value="PRK05729.1"/>
    <property type="match status" value="1"/>
</dbReference>
<dbReference type="NCBIfam" id="TIGR00422">
    <property type="entry name" value="valS"/>
    <property type="match status" value="1"/>
</dbReference>
<dbReference type="PANTHER" id="PTHR11946:SF93">
    <property type="entry name" value="VALINE--TRNA LIGASE, CHLOROPLASTIC_MITOCHONDRIAL 2"/>
    <property type="match status" value="1"/>
</dbReference>
<dbReference type="PANTHER" id="PTHR11946">
    <property type="entry name" value="VALYL-TRNA SYNTHETASES"/>
    <property type="match status" value="1"/>
</dbReference>
<dbReference type="Pfam" id="PF08264">
    <property type="entry name" value="Anticodon_1"/>
    <property type="match status" value="1"/>
</dbReference>
<dbReference type="Pfam" id="PF00133">
    <property type="entry name" value="tRNA-synt_1"/>
    <property type="match status" value="1"/>
</dbReference>
<dbReference type="Pfam" id="PF10458">
    <property type="entry name" value="Val_tRNA-synt_C"/>
    <property type="match status" value="1"/>
</dbReference>
<dbReference type="PRINTS" id="PR00986">
    <property type="entry name" value="TRNASYNTHVAL"/>
</dbReference>
<dbReference type="SUPFAM" id="SSF47323">
    <property type="entry name" value="Anticodon-binding domain of a subclass of class I aminoacyl-tRNA synthetases"/>
    <property type="match status" value="1"/>
</dbReference>
<dbReference type="SUPFAM" id="SSF52374">
    <property type="entry name" value="Nucleotidylyl transferase"/>
    <property type="match status" value="1"/>
</dbReference>
<dbReference type="SUPFAM" id="SSF46589">
    <property type="entry name" value="tRNA-binding arm"/>
    <property type="match status" value="1"/>
</dbReference>
<dbReference type="SUPFAM" id="SSF50677">
    <property type="entry name" value="ValRS/IleRS/LeuRS editing domain"/>
    <property type="match status" value="1"/>
</dbReference>
<dbReference type="PROSITE" id="PS00178">
    <property type="entry name" value="AA_TRNA_LIGASE_I"/>
    <property type="match status" value="1"/>
</dbReference>
<keyword id="KW-0030">Aminoacyl-tRNA synthetase</keyword>
<keyword id="KW-0067">ATP-binding</keyword>
<keyword id="KW-0175">Coiled coil</keyword>
<keyword id="KW-0963">Cytoplasm</keyword>
<keyword id="KW-0436">Ligase</keyword>
<keyword id="KW-0479">Metal-binding</keyword>
<keyword id="KW-0547">Nucleotide-binding</keyword>
<keyword id="KW-0648">Protein biosynthesis</keyword>
<keyword id="KW-0862">Zinc</keyword>
<organism>
    <name type="scientific">Thermus thermophilus (strain ATCC BAA-163 / DSM 7039 / HB27)</name>
    <dbReference type="NCBI Taxonomy" id="262724"/>
    <lineage>
        <taxon>Bacteria</taxon>
        <taxon>Thermotogati</taxon>
        <taxon>Deinococcota</taxon>
        <taxon>Deinococci</taxon>
        <taxon>Thermales</taxon>
        <taxon>Thermaceae</taxon>
        <taxon>Thermus</taxon>
    </lineage>
</organism>
<accession>Q72JG7</accession>
<sequence>MDLPKAYDPKSVEPKWAEKWAKNPFVANPKSGKPPFVIFMPPPNVTGSLHMGHALDNSLQDALIRYKRMRGFEAVWLPGTDHAGIATQVVVERLLLKEGKTRHDLGREKFLERVWQWKEESGGTILKQLKRLGASADWSREAFTMDEKRSRAVRYAFSRYYHEGLAYRAPRLVNWCPRCETTLSDLEVETEPTPGKLYTLRYEVEGGGFIAIATVRPETVFADQAIAVHPEDERYRHLIGKRARIPLTEVWIPILADPAVEKDFGTGALKVTPAHDPLDYEIGERHGLEPVSVINLEGRMEGERVPEALRGLDRFEARRKAVELFREAGHLVKEEDYTIALATCSRCGTPIEYAIFPQWWLRMKPLAEEVLKGLRRGDIAFVPERWKKVNIDWLENVKDWNISRQLWWGHQIPAWYCEDCQAVNVPKPERYLEDPTSCEACGSPRLKRDEDVFDTWFSSALWPLSTLGWPEETEDLKAFYPGDVLVTGYDILFLWVSRMEVSGYHFMGERPFKTVLLHGLVLDEKGQKMSKSKGNVIDPLEMVERYGADALRFALTYLATGGQDIRLDLRWLEMARNFANKLYNAARFVLLSREGFQAKEDTPTLADRFMRSRLSQGVEEITALYEALDLAQAAREVYELVWSEFCDWYLEAAKPALKAGNAHTLRTLEEVLAVLLKLLHPMMPFLTSELYQALTGKEELALEAWPEPGGRDEEAERAFEALKQAVTAVRALKAEAGLPPAQEVRVYLEGETAPVGENLEVFRFLARADLLPERPAKALVKAMPRVTARMPLEGLLDVEEWRRRQEKRLKELLALAERSQRKLASPGFREKAPKEVVEAEEARLRENLEQAERIREALSQIG</sequence>
<comment type="function">
    <text evidence="2">Catalyzes the attachment of valine to tRNA(Val). As ValRS can inadvertently accommodate and process structurally similar amino acids such as threonine, to avoid such errors, it has a 'posttransfer' editing activity that hydrolyzes mischarged Thr-tRNA(Val) in a tRNA-dependent manner.</text>
</comment>
<comment type="catalytic activity">
    <reaction evidence="2">
        <text>tRNA(Val) + L-valine + ATP = L-valyl-tRNA(Val) + AMP + diphosphate</text>
        <dbReference type="Rhea" id="RHEA:10704"/>
        <dbReference type="Rhea" id="RHEA-COMP:9672"/>
        <dbReference type="Rhea" id="RHEA-COMP:9708"/>
        <dbReference type="ChEBI" id="CHEBI:30616"/>
        <dbReference type="ChEBI" id="CHEBI:33019"/>
        <dbReference type="ChEBI" id="CHEBI:57762"/>
        <dbReference type="ChEBI" id="CHEBI:78442"/>
        <dbReference type="ChEBI" id="CHEBI:78537"/>
        <dbReference type="ChEBI" id="CHEBI:456215"/>
        <dbReference type="EC" id="6.1.1.9"/>
    </reaction>
</comment>
<comment type="cofactor">
    <cofactor evidence="1">
        <name>Zn(2+)</name>
        <dbReference type="ChEBI" id="CHEBI:29105"/>
    </cofactor>
    <text evidence="1">Binds 2 Zn(2+) ions per subunit.</text>
</comment>
<comment type="subunit">
    <text evidence="2">Monomer.</text>
</comment>
<comment type="subcellular location">
    <subcellularLocation>
        <location evidence="2">Cytoplasm</location>
    </subcellularLocation>
</comment>
<comment type="domain">
    <text evidence="2">ValRS has two distinct active sites: one for aminoacylation and one for editing. The misactivated threonine is translocated from the active site to the editing site.</text>
</comment>
<comment type="domain">
    <text evidence="2">The C-terminal coiled-coil domain is crucial for aminoacylation activity.</text>
</comment>
<comment type="similarity">
    <text evidence="2">Belongs to the class-I aminoacyl-tRNA synthetase family. ValS type 1 subfamily.</text>
</comment>
<reference key="1">
    <citation type="journal article" date="2004" name="Nat. Biotechnol.">
        <title>The genome sequence of the extreme thermophile Thermus thermophilus.</title>
        <authorList>
            <person name="Henne A."/>
            <person name="Brueggemann H."/>
            <person name="Raasch C."/>
            <person name="Wiezer A."/>
            <person name="Hartsch T."/>
            <person name="Liesegang H."/>
            <person name="Johann A."/>
            <person name="Lienard T."/>
            <person name="Gohl O."/>
            <person name="Martinez-Arias R."/>
            <person name="Jacobi C."/>
            <person name="Starkuviene V."/>
            <person name="Schlenczeck S."/>
            <person name="Dencker S."/>
            <person name="Huber R."/>
            <person name="Klenk H.-P."/>
            <person name="Kramer W."/>
            <person name="Merkl R."/>
            <person name="Gottschalk G."/>
            <person name="Fritz H.-J."/>
        </authorList>
    </citation>
    <scope>NUCLEOTIDE SEQUENCE [LARGE SCALE GENOMIC DNA]</scope>
    <source>
        <strain>ATCC BAA-163 / DSM 7039 / HB27</strain>
    </source>
</reference>
<evidence type="ECO:0000250" key="1"/>
<evidence type="ECO:0000255" key="2">
    <source>
        <dbReference type="HAMAP-Rule" id="MF_02004"/>
    </source>
</evidence>